<gene>
    <name evidence="1" type="primary">pdxH</name>
    <name type="ordered locus">BURPS1710b_1061</name>
</gene>
<sequence>MTTLADLRTNYSRASLDAADVNPNPFVQFDVWFKEALDAQLPEPNTMTLATVDESGRPSARIVLIKGADERGFVFFTNYESRKGRELAHNPNAALLFYWIELERQVRVEGRIEKTSEEESDRYFASRPLGSRIGAWASEQSAVIESRALLEAREKEIGARFGENPPRPPHWGGYRLVPSSIEFWQGRPSRLHDRLLYTRDAASASGWKIARLAP</sequence>
<proteinExistence type="inferred from homology"/>
<feature type="chain" id="PRO_0000255858" description="Pyridoxine/pyridoxamine 5'-phosphate oxidase">
    <location>
        <begin position="1"/>
        <end position="214"/>
    </location>
</feature>
<feature type="binding site" evidence="1">
    <location>
        <begin position="8"/>
        <end position="11"/>
    </location>
    <ligand>
        <name>substrate</name>
    </ligand>
</feature>
<feature type="binding site" evidence="1">
    <location>
        <begin position="61"/>
        <end position="66"/>
    </location>
    <ligand>
        <name>FMN</name>
        <dbReference type="ChEBI" id="CHEBI:58210"/>
    </ligand>
</feature>
<feature type="binding site" evidence="1">
    <location>
        <position position="66"/>
    </location>
    <ligand>
        <name>substrate</name>
    </ligand>
</feature>
<feature type="binding site" evidence="1">
    <location>
        <begin position="76"/>
        <end position="77"/>
    </location>
    <ligand>
        <name>FMN</name>
        <dbReference type="ChEBI" id="CHEBI:58210"/>
    </ligand>
</feature>
<feature type="binding site" evidence="1">
    <location>
        <position position="82"/>
    </location>
    <ligand>
        <name>FMN</name>
        <dbReference type="ChEBI" id="CHEBI:58210"/>
    </ligand>
</feature>
<feature type="binding site" evidence="1">
    <location>
        <position position="83"/>
    </location>
    <ligand>
        <name>FMN</name>
        <dbReference type="ChEBI" id="CHEBI:58210"/>
    </ligand>
</feature>
<feature type="binding site" evidence="1">
    <location>
        <position position="105"/>
    </location>
    <ligand>
        <name>FMN</name>
        <dbReference type="ChEBI" id="CHEBI:58210"/>
    </ligand>
</feature>
<feature type="binding site" evidence="1">
    <location>
        <position position="123"/>
    </location>
    <ligand>
        <name>substrate</name>
    </ligand>
</feature>
<feature type="binding site" evidence="1">
    <location>
        <position position="127"/>
    </location>
    <ligand>
        <name>substrate</name>
    </ligand>
</feature>
<feature type="binding site" evidence="1">
    <location>
        <position position="131"/>
    </location>
    <ligand>
        <name>substrate</name>
    </ligand>
</feature>
<feature type="binding site" evidence="1">
    <location>
        <begin position="140"/>
        <end position="141"/>
    </location>
    <ligand>
        <name>FMN</name>
        <dbReference type="ChEBI" id="CHEBI:58210"/>
    </ligand>
</feature>
<feature type="binding site" evidence="1">
    <location>
        <position position="184"/>
    </location>
    <ligand>
        <name>FMN</name>
        <dbReference type="ChEBI" id="CHEBI:58210"/>
    </ligand>
</feature>
<feature type="binding site" evidence="1">
    <location>
        <begin position="190"/>
        <end position="192"/>
    </location>
    <ligand>
        <name>substrate</name>
    </ligand>
</feature>
<feature type="binding site" evidence="1">
    <location>
        <position position="194"/>
    </location>
    <ligand>
        <name>FMN</name>
        <dbReference type="ChEBI" id="CHEBI:58210"/>
    </ligand>
</feature>
<reference key="1">
    <citation type="journal article" date="2010" name="Genome Biol. Evol.">
        <title>Continuing evolution of Burkholderia mallei through genome reduction and large-scale rearrangements.</title>
        <authorList>
            <person name="Losada L."/>
            <person name="Ronning C.M."/>
            <person name="DeShazer D."/>
            <person name="Woods D."/>
            <person name="Fedorova N."/>
            <person name="Kim H.S."/>
            <person name="Shabalina S.A."/>
            <person name="Pearson T.R."/>
            <person name="Brinkac L."/>
            <person name="Tan P."/>
            <person name="Nandi T."/>
            <person name="Crabtree J."/>
            <person name="Badger J."/>
            <person name="Beckstrom-Sternberg S."/>
            <person name="Saqib M."/>
            <person name="Schutzer S.E."/>
            <person name="Keim P."/>
            <person name="Nierman W.C."/>
        </authorList>
    </citation>
    <scope>NUCLEOTIDE SEQUENCE [LARGE SCALE GENOMIC DNA]</scope>
    <source>
        <strain>1710b</strain>
    </source>
</reference>
<protein>
    <recommendedName>
        <fullName evidence="1">Pyridoxine/pyridoxamine 5'-phosphate oxidase</fullName>
        <ecNumber evidence="1">1.4.3.5</ecNumber>
    </recommendedName>
    <alternativeName>
        <fullName evidence="1">PNP/PMP oxidase</fullName>
        <shortName evidence="1">PNPOx</shortName>
    </alternativeName>
    <alternativeName>
        <fullName evidence="1">Pyridoxal 5'-phosphate synthase</fullName>
    </alternativeName>
</protein>
<evidence type="ECO:0000255" key="1">
    <source>
        <dbReference type="HAMAP-Rule" id="MF_01629"/>
    </source>
</evidence>
<evidence type="ECO:0000305" key="2"/>
<dbReference type="EC" id="1.4.3.5" evidence="1"/>
<dbReference type="EMBL" id="CP000124">
    <property type="protein sequence ID" value="ABA48298.1"/>
    <property type="status" value="ALT_INIT"/>
    <property type="molecule type" value="Genomic_DNA"/>
</dbReference>
<dbReference type="RefSeq" id="WP_004522643.1">
    <property type="nucleotide sequence ID" value="NC_007434.1"/>
</dbReference>
<dbReference type="SMR" id="Q3JVD0"/>
<dbReference type="EnsemblBacteria" id="ABA48298">
    <property type="protein sequence ID" value="ABA48298"/>
    <property type="gene ID" value="BURPS1710b_1061"/>
</dbReference>
<dbReference type="GeneID" id="93059361"/>
<dbReference type="KEGG" id="bpm:BURPS1710b_1061"/>
<dbReference type="HOGENOM" id="CLU_032263_2_2_4"/>
<dbReference type="UniPathway" id="UPA01068">
    <property type="reaction ID" value="UER00304"/>
</dbReference>
<dbReference type="UniPathway" id="UPA01068">
    <property type="reaction ID" value="UER00305"/>
</dbReference>
<dbReference type="Proteomes" id="UP000002700">
    <property type="component" value="Chromosome I"/>
</dbReference>
<dbReference type="GO" id="GO:0010181">
    <property type="term" value="F:FMN binding"/>
    <property type="evidence" value="ECO:0007669"/>
    <property type="project" value="UniProtKB-UniRule"/>
</dbReference>
<dbReference type="GO" id="GO:0004733">
    <property type="term" value="F:pyridoxamine phosphate oxidase activity"/>
    <property type="evidence" value="ECO:0007669"/>
    <property type="project" value="UniProtKB-UniRule"/>
</dbReference>
<dbReference type="GO" id="GO:0008615">
    <property type="term" value="P:pyridoxine biosynthetic process"/>
    <property type="evidence" value="ECO:0007669"/>
    <property type="project" value="UniProtKB-KW"/>
</dbReference>
<dbReference type="FunFam" id="2.30.110.10:FF:000005">
    <property type="entry name" value="NAD(P)H-hydrate epimerase"/>
    <property type="match status" value="1"/>
</dbReference>
<dbReference type="Gene3D" id="2.30.110.10">
    <property type="entry name" value="Electron Transport, Fmn-binding Protein, Chain A"/>
    <property type="match status" value="1"/>
</dbReference>
<dbReference type="HAMAP" id="MF_01629">
    <property type="entry name" value="PdxH"/>
    <property type="match status" value="1"/>
</dbReference>
<dbReference type="InterPro" id="IPR000659">
    <property type="entry name" value="Pyridox_Oxase"/>
</dbReference>
<dbReference type="InterPro" id="IPR019740">
    <property type="entry name" value="Pyridox_Oxase_CS"/>
</dbReference>
<dbReference type="InterPro" id="IPR011576">
    <property type="entry name" value="Pyridox_Oxase_N"/>
</dbReference>
<dbReference type="InterPro" id="IPR019576">
    <property type="entry name" value="Pyridoxamine_oxidase_dimer_C"/>
</dbReference>
<dbReference type="InterPro" id="IPR012349">
    <property type="entry name" value="Split_barrel_FMN-bd"/>
</dbReference>
<dbReference type="NCBIfam" id="TIGR00558">
    <property type="entry name" value="pdxH"/>
    <property type="match status" value="1"/>
</dbReference>
<dbReference type="NCBIfam" id="NF004231">
    <property type="entry name" value="PRK05679.1"/>
    <property type="match status" value="1"/>
</dbReference>
<dbReference type="PANTHER" id="PTHR10851:SF0">
    <property type="entry name" value="PYRIDOXINE-5'-PHOSPHATE OXIDASE"/>
    <property type="match status" value="1"/>
</dbReference>
<dbReference type="PANTHER" id="PTHR10851">
    <property type="entry name" value="PYRIDOXINE-5-PHOSPHATE OXIDASE"/>
    <property type="match status" value="1"/>
</dbReference>
<dbReference type="Pfam" id="PF10590">
    <property type="entry name" value="PNP_phzG_C"/>
    <property type="match status" value="1"/>
</dbReference>
<dbReference type="Pfam" id="PF01243">
    <property type="entry name" value="PNPOx_N"/>
    <property type="match status" value="1"/>
</dbReference>
<dbReference type="PIRSF" id="PIRSF000190">
    <property type="entry name" value="Pyd_amn-ph_oxd"/>
    <property type="match status" value="1"/>
</dbReference>
<dbReference type="SUPFAM" id="SSF50475">
    <property type="entry name" value="FMN-binding split barrel"/>
    <property type="match status" value="1"/>
</dbReference>
<dbReference type="PROSITE" id="PS01064">
    <property type="entry name" value="PYRIDOX_OXIDASE"/>
    <property type="match status" value="1"/>
</dbReference>
<accession>Q3JVD0</accession>
<organism>
    <name type="scientific">Burkholderia pseudomallei (strain 1710b)</name>
    <dbReference type="NCBI Taxonomy" id="320372"/>
    <lineage>
        <taxon>Bacteria</taxon>
        <taxon>Pseudomonadati</taxon>
        <taxon>Pseudomonadota</taxon>
        <taxon>Betaproteobacteria</taxon>
        <taxon>Burkholderiales</taxon>
        <taxon>Burkholderiaceae</taxon>
        <taxon>Burkholderia</taxon>
        <taxon>pseudomallei group</taxon>
    </lineage>
</organism>
<comment type="function">
    <text evidence="1">Catalyzes the oxidation of either pyridoxine 5'-phosphate (PNP) or pyridoxamine 5'-phosphate (PMP) into pyridoxal 5'-phosphate (PLP).</text>
</comment>
<comment type="catalytic activity">
    <reaction evidence="1">
        <text>pyridoxamine 5'-phosphate + O2 + H2O = pyridoxal 5'-phosphate + H2O2 + NH4(+)</text>
        <dbReference type="Rhea" id="RHEA:15817"/>
        <dbReference type="ChEBI" id="CHEBI:15377"/>
        <dbReference type="ChEBI" id="CHEBI:15379"/>
        <dbReference type="ChEBI" id="CHEBI:16240"/>
        <dbReference type="ChEBI" id="CHEBI:28938"/>
        <dbReference type="ChEBI" id="CHEBI:58451"/>
        <dbReference type="ChEBI" id="CHEBI:597326"/>
        <dbReference type="EC" id="1.4.3.5"/>
    </reaction>
</comment>
<comment type="catalytic activity">
    <reaction evidence="1">
        <text>pyridoxine 5'-phosphate + O2 = pyridoxal 5'-phosphate + H2O2</text>
        <dbReference type="Rhea" id="RHEA:15149"/>
        <dbReference type="ChEBI" id="CHEBI:15379"/>
        <dbReference type="ChEBI" id="CHEBI:16240"/>
        <dbReference type="ChEBI" id="CHEBI:58589"/>
        <dbReference type="ChEBI" id="CHEBI:597326"/>
        <dbReference type="EC" id="1.4.3.5"/>
    </reaction>
</comment>
<comment type="cofactor">
    <cofactor evidence="1">
        <name>FMN</name>
        <dbReference type="ChEBI" id="CHEBI:58210"/>
    </cofactor>
    <text evidence="1">Binds 1 FMN per subunit.</text>
</comment>
<comment type="pathway">
    <text evidence="1">Cofactor metabolism; pyridoxal 5'-phosphate salvage; pyridoxal 5'-phosphate from pyridoxamine 5'-phosphate: step 1/1.</text>
</comment>
<comment type="pathway">
    <text evidence="1">Cofactor metabolism; pyridoxal 5'-phosphate salvage; pyridoxal 5'-phosphate from pyridoxine 5'-phosphate: step 1/1.</text>
</comment>
<comment type="subunit">
    <text evidence="1">Homodimer.</text>
</comment>
<comment type="similarity">
    <text evidence="1">Belongs to the pyridoxamine 5'-phosphate oxidase family.</text>
</comment>
<comment type="sequence caution" evidence="2">
    <conflict type="erroneous initiation">
        <sequence resource="EMBL-CDS" id="ABA48298"/>
    </conflict>
</comment>
<keyword id="KW-0285">Flavoprotein</keyword>
<keyword id="KW-0288">FMN</keyword>
<keyword id="KW-0560">Oxidoreductase</keyword>
<keyword id="KW-0664">Pyridoxine biosynthesis</keyword>
<name>PDXH_BURP1</name>